<evidence type="ECO:0000255" key="1">
    <source>
        <dbReference type="HAMAP-Rule" id="MF_00278"/>
    </source>
</evidence>
<feature type="chain" id="PRO_0000152410" description="Imidazole glycerol phosphate synthase subunit HisH">
    <location>
        <begin position="1"/>
        <end position="212"/>
    </location>
</feature>
<feature type="domain" description="Glutamine amidotransferase type-1" evidence="1">
    <location>
        <begin position="3"/>
        <end position="212"/>
    </location>
</feature>
<feature type="active site" description="Nucleophile" evidence="1">
    <location>
        <position position="81"/>
    </location>
</feature>
<feature type="active site" evidence="1">
    <location>
        <position position="190"/>
    </location>
</feature>
<feature type="active site" evidence="1">
    <location>
        <position position="192"/>
    </location>
</feature>
<keyword id="KW-0028">Amino-acid biosynthesis</keyword>
<keyword id="KW-0963">Cytoplasm</keyword>
<keyword id="KW-0315">Glutamine amidotransferase</keyword>
<keyword id="KW-0368">Histidine biosynthesis</keyword>
<keyword id="KW-0378">Hydrolase</keyword>
<keyword id="KW-0456">Lyase</keyword>
<keyword id="KW-1185">Reference proteome</keyword>
<comment type="function">
    <text evidence="1">IGPS catalyzes the conversion of PRFAR and glutamine to IGP, AICAR and glutamate. The HisH subunit catalyzes the hydrolysis of glutamine to glutamate and ammonia as part of the synthesis of IGP and AICAR. The resulting ammonia molecule is channeled to the active site of HisF.</text>
</comment>
<comment type="catalytic activity">
    <reaction evidence="1">
        <text>5-[(5-phospho-1-deoxy-D-ribulos-1-ylimino)methylamino]-1-(5-phospho-beta-D-ribosyl)imidazole-4-carboxamide + L-glutamine = D-erythro-1-(imidazol-4-yl)glycerol 3-phosphate + 5-amino-1-(5-phospho-beta-D-ribosyl)imidazole-4-carboxamide + L-glutamate + H(+)</text>
        <dbReference type="Rhea" id="RHEA:24793"/>
        <dbReference type="ChEBI" id="CHEBI:15378"/>
        <dbReference type="ChEBI" id="CHEBI:29985"/>
        <dbReference type="ChEBI" id="CHEBI:58278"/>
        <dbReference type="ChEBI" id="CHEBI:58359"/>
        <dbReference type="ChEBI" id="CHEBI:58475"/>
        <dbReference type="ChEBI" id="CHEBI:58525"/>
        <dbReference type="EC" id="4.3.2.10"/>
    </reaction>
</comment>
<comment type="catalytic activity">
    <reaction evidence="1">
        <text>L-glutamine + H2O = L-glutamate + NH4(+)</text>
        <dbReference type="Rhea" id="RHEA:15889"/>
        <dbReference type="ChEBI" id="CHEBI:15377"/>
        <dbReference type="ChEBI" id="CHEBI:28938"/>
        <dbReference type="ChEBI" id="CHEBI:29985"/>
        <dbReference type="ChEBI" id="CHEBI:58359"/>
        <dbReference type="EC" id="3.5.1.2"/>
    </reaction>
</comment>
<comment type="pathway">
    <text evidence="1">Amino-acid biosynthesis; L-histidine biosynthesis; L-histidine from 5-phospho-alpha-D-ribose 1-diphosphate: step 5/9.</text>
</comment>
<comment type="subunit">
    <text evidence="1">Heterodimer of HisH and HisF.</text>
</comment>
<comment type="subcellular location">
    <subcellularLocation>
        <location evidence="1">Cytoplasm</location>
    </subcellularLocation>
</comment>
<name>HIS5_PSEPK</name>
<proteinExistence type="inferred from homology"/>
<reference key="1">
    <citation type="journal article" date="2002" name="Environ. Microbiol.">
        <title>Complete genome sequence and comparative analysis of the metabolically versatile Pseudomonas putida KT2440.</title>
        <authorList>
            <person name="Nelson K.E."/>
            <person name="Weinel C."/>
            <person name="Paulsen I.T."/>
            <person name="Dodson R.J."/>
            <person name="Hilbert H."/>
            <person name="Martins dos Santos V.A.P."/>
            <person name="Fouts D.E."/>
            <person name="Gill S.R."/>
            <person name="Pop M."/>
            <person name="Holmes M."/>
            <person name="Brinkac L.M."/>
            <person name="Beanan M.J."/>
            <person name="DeBoy R.T."/>
            <person name="Daugherty S.C."/>
            <person name="Kolonay J.F."/>
            <person name="Madupu R."/>
            <person name="Nelson W.C."/>
            <person name="White O."/>
            <person name="Peterson J.D."/>
            <person name="Khouri H.M."/>
            <person name="Hance I."/>
            <person name="Chris Lee P."/>
            <person name="Holtzapple E.K."/>
            <person name="Scanlan D."/>
            <person name="Tran K."/>
            <person name="Moazzez A."/>
            <person name="Utterback T.R."/>
            <person name="Rizzo M."/>
            <person name="Lee K."/>
            <person name="Kosack D."/>
            <person name="Moestl D."/>
            <person name="Wedler H."/>
            <person name="Lauber J."/>
            <person name="Stjepandic D."/>
            <person name="Hoheisel J."/>
            <person name="Straetz M."/>
            <person name="Heim S."/>
            <person name="Kiewitz C."/>
            <person name="Eisen J.A."/>
            <person name="Timmis K.N."/>
            <person name="Duesterhoeft A."/>
            <person name="Tuemmler B."/>
            <person name="Fraser C.M."/>
        </authorList>
    </citation>
    <scope>NUCLEOTIDE SEQUENCE [LARGE SCALE GENOMIC DNA]</scope>
    <source>
        <strain>ATCC 47054 / DSM 6125 / CFBP 8728 / NCIMB 11950 / KT2440</strain>
    </source>
</reference>
<accession>Q88R44</accession>
<gene>
    <name evidence="1" type="primary">hisH</name>
    <name type="ordered locus">PP_0290</name>
</gene>
<protein>
    <recommendedName>
        <fullName evidence="1">Imidazole glycerol phosphate synthase subunit HisH</fullName>
        <ecNumber evidence="1">4.3.2.10</ecNumber>
    </recommendedName>
    <alternativeName>
        <fullName evidence="1">IGP synthase glutaminase subunit</fullName>
        <ecNumber evidence="1">3.5.1.2</ecNumber>
    </alternativeName>
    <alternativeName>
        <fullName evidence="1">IGP synthase subunit HisH</fullName>
    </alternativeName>
    <alternativeName>
        <fullName evidence="1">ImGP synthase subunit HisH</fullName>
        <shortName evidence="1">IGPS subunit HisH</shortName>
    </alternativeName>
</protein>
<organism>
    <name type="scientific">Pseudomonas putida (strain ATCC 47054 / DSM 6125 / CFBP 8728 / NCIMB 11950 / KT2440)</name>
    <dbReference type="NCBI Taxonomy" id="160488"/>
    <lineage>
        <taxon>Bacteria</taxon>
        <taxon>Pseudomonadati</taxon>
        <taxon>Pseudomonadota</taxon>
        <taxon>Gammaproteobacteria</taxon>
        <taxon>Pseudomonadales</taxon>
        <taxon>Pseudomonadaceae</taxon>
        <taxon>Pseudomonas</taxon>
    </lineage>
</organism>
<sequence>MQTVAVIDYGMGNLHSVAKALEHVGAGKVLVTSDASVIREADRVVFPGVGAIRDCMAEIRRLGFDSLVREVSQDRPFLGICVGMQALLEHSEENAGVDCIGLFPGQVRFFGKDLQEEGEHLKVPHMGWNEVSQTIDHPLWHDIPDRARFYFVHSYYINAGKPGQVVGRGHYGVDFAAALADGSRFAVQFHPEKSHTHGLQLLQNFIAWDGRW</sequence>
<dbReference type="EC" id="4.3.2.10" evidence="1"/>
<dbReference type="EC" id="3.5.1.2" evidence="1"/>
<dbReference type="EMBL" id="AE015451">
    <property type="protein sequence ID" value="AAN65921.1"/>
    <property type="molecule type" value="Genomic_DNA"/>
</dbReference>
<dbReference type="RefSeq" id="NP_742457.1">
    <property type="nucleotide sequence ID" value="NC_002947.4"/>
</dbReference>
<dbReference type="RefSeq" id="WP_010951658.1">
    <property type="nucleotide sequence ID" value="NZ_CP169744.1"/>
</dbReference>
<dbReference type="SMR" id="Q88R44"/>
<dbReference type="STRING" id="160488.PP_0290"/>
<dbReference type="MEROPS" id="C26.965"/>
<dbReference type="PaxDb" id="160488-PP_0290"/>
<dbReference type="GeneID" id="83677563"/>
<dbReference type="KEGG" id="ppu:PP_0290"/>
<dbReference type="PATRIC" id="fig|160488.4.peg.315"/>
<dbReference type="eggNOG" id="COG0118">
    <property type="taxonomic scope" value="Bacteria"/>
</dbReference>
<dbReference type="HOGENOM" id="CLU_071837_2_0_6"/>
<dbReference type="OrthoDB" id="9807137at2"/>
<dbReference type="PhylomeDB" id="Q88R44"/>
<dbReference type="BioCyc" id="PPUT160488:G1G01-321-MONOMER"/>
<dbReference type="UniPathway" id="UPA00031">
    <property type="reaction ID" value="UER00010"/>
</dbReference>
<dbReference type="Proteomes" id="UP000000556">
    <property type="component" value="Chromosome"/>
</dbReference>
<dbReference type="GO" id="GO:0005737">
    <property type="term" value="C:cytoplasm"/>
    <property type="evidence" value="ECO:0007669"/>
    <property type="project" value="UniProtKB-SubCell"/>
</dbReference>
<dbReference type="GO" id="GO:0004359">
    <property type="term" value="F:glutaminase activity"/>
    <property type="evidence" value="ECO:0007669"/>
    <property type="project" value="UniProtKB-EC"/>
</dbReference>
<dbReference type="GO" id="GO:0000107">
    <property type="term" value="F:imidazoleglycerol-phosphate synthase activity"/>
    <property type="evidence" value="ECO:0007669"/>
    <property type="project" value="UniProtKB-UniRule"/>
</dbReference>
<dbReference type="GO" id="GO:0016829">
    <property type="term" value="F:lyase activity"/>
    <property type="evidence" value="ECO:0007669"/>
    <property type="project" value="UniProtKB-KW"/>
</dbReference>
<dbReference type="GO" id="GO:0000105">
    <property type="term" value="P:L-histidine biosynthetic process"/>
    <property type="evidence" value="ECO:0007669"/>
    <property type="project" value="UniProtKB-UniRule"/>
</dbReference>
<dbReference type="CDD" id="cd01748">
    <property type="entry name" value="GATase1_IGP_Synthase"/>
    <property type="match status" value="1"/>
</dbReference>
<dbReference type="FunFam" id="3.40.50.880:FF:000023">
    <property type="entry name" value="Imidazole glycerol phosphate synthase subunit HisH"/>
    <property type="match status" value="1"/>
</dbReference>
<dbReference type="Gene3D" id="3.40.50.880">
    <property type="match status" value="1"/>
</dbReference>
<dbReference type="HAMAP" id="MF_00278">
    <property type="entry name" value="HisH"/>
    <property type="match status" value="1"/>
</dbReference>
<dbReference type="InterPro" id="IPR029062">
    <property type="entry name" value="Class_I_gatase-like"/>
</dbReference>
<dbReference type="InterPro" id="IPR017926">
    <property type="entry name" value="GATASE"/>
</dbReference>
<dbReference type="InterPro" id="IPR010139">
    <property type="entry name" value="Imidazole-glycPsynth_HisH"/>
</dbReference>
<dbReference type="NCBIfam" id="TIGR01855">
    <property type="entry name" value="IMP_synth_hisH"/>
    <property type="match status" value="1"/>
</dbReference>
<dbReference type="PANTHER" id="PTHR42701">
    <property type="entry name" value="IMIDAZOLE GLYCEROL PHOSPHATE SYNTHASE SUBUNIT HISH"/>
    <property type="match status" value="1"/>
</dbReference>
<dbReference type="PANTHER" id="PTHR42701:SF2">
    <property type="entry name" value="IMIDAZOLE GLYCEROL PHOSPHATE SYNTHASE SUBUNIT HISH 1"/>
    <property type="match status" value="1"/>
</dbReference>
<dbReference type="Pfam" id="PF00117">
    <property type="entry name" value="GATase"/>
    <property type="match status" value="1"/>
</dbReference>
<dbReference type="PIRSF" id="PIRSF000495">
    <property type="entry name" value="Amidotransf_hisH"/>
    <property type="match status" value="1"/>
</dbReference>
<dbReference type="SUPFAM" id="SSF52317">
    <property type="entry name" value="Class I glutamine amidotransferase-like"/>
    <property type="match status" value="1"/>
</dbReference>
<dbReference type="PROSITE" id="PS51273">
    <property type="entry name" value="GATASE_TYPE_1"/>
    <property type="match status" value="1"/>
</dbReference>